<evidence type="ECO:0000250" key="1">
    <source>
        <dbReference type="UniProtKB" id="P22732"/>
    </source>
</evidence>
<evidence type="ECO:0000250" key="2">
    <source>
        <dbReference type="UniProtKB" id="P43427"/>
    </source>
</evidence>
<evidence type="ECO:0000250" key="3">
    <source>
        <dbReference type="UniProtKB" id="Q9WV38"/>
    </source>
</evidence>
<evidence type="ECO:0000255" key="4"/>
<evidence type="ECO:0000269" key="5">
    <source>
    </source>
</evidence>
<evidence type="ECO:0000305" key="6"/>
<evidence type="ECO:0007744" key="7">
    <source>
        <dbReference type="PDB" id="4YB9"/>
    </source>
</evidence>
<evidence type="ECO:0007829" key="8">
    <source>
        <dbReference type="PDB" id="4YB9"/>
    </source>
</evidence>
<protein>
    <recommendedName>
        <fullName evidence="6">Solute carrier family 2, facilitated glucose transporter member 5</fullName>
    </recommendedName>
    <alternativeName>
        <fullName evidence="6">Fructose transporter</fullName>
    </alternativeName>
    <alternativeName>
        <fullName evidence="1">Glucose transporter type 5, small intestine</fullName>
        <shortName evidence="1">GLUT-5</shortName>
    </alternativeName>
</protein>
<comment type="function">
    <text evidence="2 3">Functions as a fructose transporter that has only low activity with other monosaccharides. Can mediate the uptake of deoxyglucose, but with low efficiency. Essential for fructose uptake in the small intestine. Plays a role in the regulation of salt uptake and blood pressure in response to dietary fructose. Required for the development of high blood pressure in response to high dietary fructose intake.</text>
</comment>
<comment type="catalytic activity">
    <reaction evidence="1">
        <text>D-fructose(out) = D-fructose(in)</text>
        <dbReference type="Rhea" id="RHEA:60372"/>
        <dbReference type="ChEBI" id="CHEBI:37721"/>
    </reaction>
</comment>
<comment type="subcellular location">
    <subcellularLocation>
        <location evidence="3">Apical cell membrane</location>
        <topology evidence="3">Multi-pass membrane protein</topology>
    </subcellularLocation>
    <subcellularLocation>
        <location evidence="6">Cell membrane</location>
        <topology evidence="5">Multi-pass membrane protein</topology>
    </subcellularLocation>
    <subcellularLocation>
        <location evidence="2">Cell membrane</location>
        <location evidence="2">Sarcolemma</location>
    </subcellularLocation>
    <text evidence="3">Localized on the apical membrane of jejunum villi, but also on lateral plasma membranes of the villi. Transport to the cell membrane is dependent on RAB11A.</text>
</comment>
<comment type="similarity">
    <text evidence="6">Belongs to the major facilitator superfamily. Sugar transporter (TC 2.A.1.1) family. Glucose transporter subfamily.</text>
</comment>
<dbReference type="EMBL" id="BC151530">
    <property type="protein sequence ID" value="AAI51531.1"/>
    <property type="molecule type" value="mRNA"/>
</dbReference>
<dbReference type="EMBL" id="AF308830">
    <property type="protein sequence ID" value="AAK63203.1"/>
    <property type="molecule type" value="mRNA"/>
</dbReference>
<dbReference type="RefSeq" id="NP_001094512.1">
    <property type="nucleotide sequence ID" value="NM_001101042.2"/>
</dbReference>
<dbReference type="RefSeq" id="XP_024857186.1">
    <property type="nucleotide sequence ID" value="XM_025001418.2"/>
</dbReference>
<dbReference type="PDB" id="4YB9">
    <property type="method" value="X-ray"/>
    <property type="resolution" value="3.20 A"/>
    <property type="chains" value="D=1-473"/>
</dbReference>
<dbReference type="PDBsum" id="4YB9"/>
<dbReference type="SMR" id="P58353"/>
<dbReference type="FunCoup" id="P58353">
    <property type="interactions" value="371"/>
</dbReference>
<dbReference type="STRING" id="9913.ENSBTAP00000009606"/>
<dbReference type="GlyCosmos" id="P58353">
    <property type="glycosylation" value="1 site, No reported glycans"/>
</dbReference>
<dbReference type="GlyGen" id="P58353">
    <property type="glycosylation" value="1 site"/>
</dbReference>
<dbReference type="PaxDb" id="9913-ENSBTAP00000045621"/>
<dbReference type="ABCD" id="P58353">
    <property type="antibodies" value="1 sequenced antibody"/>
</dbReference>
<dbReference type="Ensembl" id="ENSBTAT00000009606.6">
    <property type="protein sequence ID" value="ENSBTAP00000009606.6"/>
    <property type="gene ID" value="ENSBTAG00000007302.7"/>
</dbReference>
<dbReference type="Ensembl" id="ENSBTAT00000048616.5">
    <property type="protein sequence ID" value="ENSBTAP00000045621.4"/>
    <property type="gene ID" value="ENSBTAG00000034323.5"/>
</dbReference>
<dbReference type="GeneID" id="282868"/>
<dbReference type="KEGG" id="bta:282868"/>
<dbReference type="CTD" id="6518"/>
<dbReference type="VEuPathDB" id="HostDB:ENSBTAG00000007302"/>
<dbReference type="VEuPathDB" id="HostDB:ENSBTAG00000034323"/>
<dbReference type="eggNOG" id="KOG0569">
    <property type="taxonomic scope" value="Eukaryota"/>
</dbReference>
<dbReference type="GeneTree" id="ENSGT00940000156846"/>
<dbReference type="HOGENOM" id="CLU_001265_30_11_1"/>
<dbReference type="InParanoid" id="P58353"/>
<dbReference type="OMA" id="QTTVSWM"/>
<dbReference type="OrthoDB" id="4540492at2759"/>
<dbReference type="Reactome" id="R-BTA-6798695">
    <property type="pathway name" value="Neutrophil degranulation"/>
</dbReference>
<dbReference type="Reactome" id="R-BTA-8981373">
    <property type="pathway name" value="Intestinal hexose absorption"/>
</dbReference>
<dbReference type="EvolutionaryTrace" id="P58353"/>
<dbReference type="Proteomes" id="UP000009136">
    <property type="component" value="Chromosome 14"/>
</dbReference>
<dbReference type="Proteomes" id="UP000009136">
    <property type="component" value="Chromosome 16"/>
</dbReference>
<dbReference type="Bgee" id="ENSBTAG00000007302">
    <property type="expression patterns" value="Expressed in anterior segment of eyeball and 62 other cell types or tissues"/>
</dbReference>
<dbReference type="GO" id="GO:0016324">
    <property type="term" value="C:apical plasma membrane"/>
    <property type="evidence" value="ECO:0000250"/>
    <property type="project" value="UniProtKB"/>
</dbReference>
<dbReference type="GO" id="GO:0005886">
    <property type="term" value="C:plasma membrane"/>
    <property type="evidence" value="ECO:0000250"/>
    <property type="project" value="UniProtKB"/>
</dbReference>
<dbReference type="GO" id="GO:0042383">
    <property type="term" value="C:sarcolemma"/>
    <property type="evidence" value="ECO:0000250"/>
    <property type="project" value="UniProtKB"/>
</dbReference>
<dbReference type="GO" id="GO:0055056">
    <property type="term" value="F:D-glucose transmembrane transporter activity"/>
    <property type="evidence" value="ECO:0000318"/>
    <property type="project" value="GO_Central"/>
</dbReference>
<dbReference type="GO" id="GO:0070061">
    <property type="term" value="F:fructose binding"/>
    <property type="evidence" value="ECO:0000250"/>
    <property type="project" value="UniProtKB"/>
</dbReference>
<dbReference type="GO" id="GO:0005353">
    <property type="term" value="F:fructose transmembrane transporter activity"/>
    <property type="evidence" value="ECO:0000250"/>
    <property type="project" value="UniProtKB"/>
</dbReference>
<dbReference type="GO" id="GO:0071332">
    <property type="term" value="P:cellular response to fructose stimulus"/>
    <property type="evidence" value="ECO:0000250"/>
    <property type="project" value="UniProtKB"/>
</dbReference>
<dbReference type="GO" id="GO:0046323">
    <property type="term" value="P:D-glucose import"/>
    <property type="evidence" value="ECO:0000318"/>
    <property type="project" value="GO_Central"/>
</dbReference>
<dbReference type="GO" id="GO:0070837">
    <property type="term" value="P:dehydroascorbic acid transport"/>
    <property type="evidence" value="ECO:0000318"/>
    <property type="project" value="GO_Central"/>
</dbReference>
<dbReference type="GO" id="GO:1990539">
    <property type="term" value="P:fructose import across plasma membrane"/>
    <property type="evidence" value="ECO:0000250"/>
    <property type="project" value="UniProtKB"/>
</dbReference>
<dbReference type="GO" id="GO:0015755">
    <property type="term" value="P:fructose transmembrane transport"/>
    <property type="evidence" value="ECO:0000318"/>
    <property type="project" value="GO_Central"/>
</dbReference>
<dbReference type="GO" id="GO:0003044">
    <property type="term" value="P:regulation of systemic arterial blood pressure mediated by a chemical signal"/>
    <property type="evidence" value="ECO:0000250"/>
    <property type="project" value="UniProtKB"/>
</dbReference>
<dbReference type="GO" id="GO:0009750">
    <property type="term" value="P:response to fructose"/>
    <property type="evidence" value="ECO:0000250"/>
    <property type="project" value="UniProtKB"/>
</dbReference>
<dbReference type="CDD" id="cd17432">
    <property type="entry name" value="MFS_GLUT_Class2"/>
    <property type="match status" value="1"/>
</dbReference>
<dbReference type="FunFam" id="1.20.1250.20:FF:001511">
    <property type="entry name" value="Solute carrier family 2, facilitated glucose transporter member 5"/>
    <property type="match status" value="1"/>
</dbReference>
<dbReference type="Gene3D" id="1.20.1250.20">
    <property type="entry name" value="MFS general substrate transporter like domains"/>
    <property type="match status" value="1"/>
</dbReference>
<dbReference type="InterPro" id="IPR002442">
    <property type="entry name" value="Fru_transpt_5"/>
</dbReference>
<dbReference type="InterPro" id="IPR045263">
    <property type="entry name" value="GLUT"/>
</dbReference>
<dbReference type="InterPro" id="IPR020846">
    <property type="entry name" value="MFS_dom"/>
</dbReference>
<dbReference type="InterPro" id="IPR005828">
    <property type="entry name" value="MFS_sugar_transport-like"/>
</dbReference>
<dbReference type="InterPro" id="IPR036259">
    <property type="entry name" value="MFS_trans_sf"/>
</dbReference>
<dbReference type="InterPro" id="IPR003663">
    <property type="entry name" value="Sugar/inositol_transpt"/>
</dbReference>
<dbReference type="InterPro" id="IPR005829">
    <property type="entry name" value="Sugar_transporter_CS"/>
</dbReference>
<dbReference type="NCBIfam" id="TIGR00879">
    <property type="entry name" value="SP"/>
    <property type="match status" value="1"/>
</dbReference>
<dbReference type="PANTHER" id="PTHR23503">
    <property type="entry name" value="SOLUTE CARRIER FAMILY 2"/>
    <property type="match status" value="1"/>
</dbReference>
<dbReference type="PANTHER" id="PTHR23503:SF32">
    <property type="entry name" value="SOLUTE CARRIER FAMILY 2, FACILITATED GLUCOSE TRANSPORTER MEMBER 5"/>
    <property type="match status" value="1"/>
</dbReference>
<dbReference type="Pfam" id="PF00083">
    <property type="entry name" value="Sugar_tr"/>
    <property type="match status" value="1"/>
</dbReference>
<dbReference type="PRINTS" id="PR01194">
    <property type="entry name" value="GLUCTRSPORT5"/>
</dbReference>
<dbReference type="PRINTS" id="PR00171">
    <property type="entry name" value="SUGRTRNSPORT"/>
</dbReference>
<dbReference type="SUPFAM" id="SSF103473">
    <property type="entry name" value="MFS general substrate transporter"/>
    <property type="match status" value="1"/>
</dbReference>
<dbReference type="PROSITE" id="PS50850">
    <property type="entry name" value="MFS"/>
    <property type="match status" value="1"/>
</dbReference>
<dbReference type="PROSITE" id="PS00216">
    <property type="entry name" value="SUGAR_TRANSPORT_1"/>
    <property type="match status" value="1"/>
</dbReference>
<dbReference type="PROSITE" id="PS00217">
    <property type="entry name" value="SUGAR_TRANSPORT_2"/>
    <property type="match status" value="1"/>
</dbReference>
<proteinExistence type="evidence at protein level"/>
<reference key="1">
    <citation type="submission" date="2007-07" db="EMBL/GenBank/DDBJ databases">
        <authorList>
            <consortium name="NIH - Mammalian Gene Collection (MGC) project"/>
        </authorList>
    </citation>
    <scope>NUCLEOTIDE SEQUENCE [LARGE SCALE MRNA]</scope>
    <source>
        <strain>Hereford</strain>
        <tissue>Kidney</tissue>
    </source>
</reference>
<reference key="2">
    <citation type="journal article" date="2001" name="Mol. Reprod. Dev.">
        <title>Glucose transporter expression is developmentally regulated in in vitro derived bovine preimplantation embryos.</title>
        <authorList>
            <person name="Augustin R."/>
            <person name="Pocar P."/>
            <person name="Navarrete-Santos A."/>
            <person name="Wrenzycki C."/>
            <person name="Gandolfi F."/>
            <person name="Niemann H."/>
            <person name="Fischer B."/>
        </authorList>
    </citation>
    <scope>NUCLEOTIDE SEQUENCE [MRNA] OF 253-456</scope>
    <source>
        <tissue>Small intestine</tissue>
    </source>
</reference>
<reference evidence="7" key="3">
    <citation type="journal article" date="2015" name="Nature">
        <title>Structure and mechanism of the mammalian fructose transporter GLUT5.</title>
        <authorList>
            <person name="Nomura N."/>
            <person name="Verdon G."/>
            <person name="Kang H.J."/>
            <person name="Shimamura T."/>
            <person name="Nomura Y."/>
            <person name="Sonoda Y."/>
            <person name="Hussien S.A."/>
            <person name="Qureshi A.A."/>
            <person name="Coincon M."/>
            <person name="Sato Y."/>
            <person name="Abe H."/>
            <person name="Nakada-Nakura Y."/>
            <person name="Hino T."/>
            <person name="Arakawa T."/>
            <person name="Kusano-Arai O."/>
            <person name="Iwanari H."/>
            <person name="Murata T."/>
            <person name="Kobayashi T."/>
            <person name="Hamakubo T."/>
            <person name="Kasahara M."/>
            <person name="Iwata S."/>
            <person name="Drew D."/>
        </authorList>
    </citation>
    <scope>X-RAY CRYSTALLOGRAPHY (3.20 ANGSTROMS) OF 1-473</scope>
    <scope>SUBCELLULAR LOCATION</scope>
    <scope>TOPOLOGY</scope>
</reference>
<gene>
    <name evidence="1" type="primary">SLC2A5</name>
    <name evidence="1" type="synonym">GLUT5</name>
</gene>
<sequence length="501" mass="55393">MEPQDPVKREGRLTPVIVLATLIAAFGSSFQYGYNVAAINSPSEFMKDFYNYTYYDRVGEYMNEFYLTLLWSVTVSMFPFGGFLGSLMVGPLVNNLGRKGTLLFNNIFSIVPALLMGFSELAKSFEMIIVARVLVGICAGLSSNVVPMYLGELAPKNWRGALGVVPQLFITIGILVAQIFGLRSLLANEEGWPILLGLTGIPAVLQLLFLPFFPESPRYLLIQKKDEAAAKSALRRLRGWHDVDAEIEEILEEDRAEKAVGFISVLKLFKMRSLRWQVISIIVLMAGQQLSGVNAIYYYADQIYLSAGVNEDDVQYVTAGTGAVNVLITVCAIFVVELMGRRFLLLLGFSVCFTACCVLTGALALQDVISWMPYVSIACVISYVIGHALGPSPIPALLVTEIFLQSSRPAAYMVAGTVHWLSNFTVGLVFPFIQVGLGAYSFVIFAVICLLTTVYIFLIIPETKSKTFIEINRIFIKMNKVPGVHPEKEELKEFPPSTARQ</sequence>
<keyword id="KW-0002">3D-structure</keyword>
<keyword id="KW-0007">Acetylation</keyword>
<keyword id="KW-1003">Cell membrane</keyword>
<keyword id="KW-0325">Glycoprotein</keyword>
<keyword id="KW-0472">Membrane</keyword>
<keyword id="KW-1185">Reference proteome</keyword>
<keyword id="KW-0762">Sugar transport</keyword>
<keyword id="KW-0812">Transmembrane</keyword>
<keyword id="KW-1133">Transmembrane helix</keyword>
<keyword id="KW-0813">Transport</keyword>
<organism>
    <name type="scientific">Bos taurus</name>
    <name type="common">Bovine</name>
    <dbReference type="NCBI Taxonomy" id="9913"/>
    <lineage>
        <taxon>Eukaryota</taxon>
        <taxon>Metazoa</taxon>
        <taxon>Chordata</taxon>
        <taxon>Craniata</taxon>
        <taxon>Vertebrata</taxon>
        <taxon>Euteleostomi</taxon>
        <taxon>Mammalia</taxon>
        <taxon>Eutheria</taxon>
        <taxon>Laurasiatheria</taxon>
        <taxon>Artiodactyla</taxon>
        <taxon>Ruminantia</taxon>
        <taxon>Pecora</taxon>
        <taxon>Bovidae</taxon>
        <taxon>Bovinae</taxon>
        <taxon>Bos</taxon>
    </lineage>
</organism>
<accession>P58353</accession>
<accession>A7MBF2</accession>
<feature type="chain" id="PRO_0000050367" description="Solute carrier family 2, facilitated glucose transporter member 5">
    <location>
        <begin position="1"/>
        <end position="501"/>
    </location>
</feature>
<feature type="topological domain" description="Cytoplasmic" evidence="5">
    <location>
        <begin position="1"/>
        <end position="18"/>
    </location>
</feature>
<feature type="transmembrane region" description="Helical; Name=1" evidence="5">
    <location>
        <begin position="19"/>
        <end position="39"/>
    </location>
</feature>
<feature type="topological domain" description="Extracellular" evidence="5">
    <location>
        <begin position="40"/>
        <end position="68"/>
    </location>
</feature>
<feature type="transmembrane region" description="Helical; Name=2" evidence="5">
    <location>
        <begin position="69"/>
        <end position="91"/>
    </location>
</feature>
<feature type="topological domain" description="Cytoplasmic" evidence="5">
    <location>
        <begin position="92"/>
        <end position="98"/>
    </location>
</feature>
<feature type="transmembrane region" description="Helical; Name=3" evidence="5">
    <location>
        <begin position="99"/>
        <end position="119"/>
    </location>
</feature>
<feature type="topological domain" description="Extracellular" evidence="5">
    <location>
        <begin position="120"/>
        <end position="126"/>
    </location>
</feature>
<feature type="transmembrane region" description="Helical; Name=4" evidence="5">
    <location>
        <begin position="127"/>
        <end position="149"/>
    </location>
</feature>
<feature type="topological domain" description="Cytoplasmic" evidence="5">
    <location>
        <begin position="150"/>
        <end position="161"/>
    </location>
</feature>
<feature type="transmembrane region" description="Helical; Name=5" evidence="5">
    <location>
        <begin position="162"/>
        <end position="182"/>
    </location>
</feature>
<feature type="topological domain" description="Extracellular" evidence="5">
    <location>
        <begin position="183"/>
        <end position="192"/>
    </location>
</feature>
<feature type="transmembrane region" description="Helical; Name=6" evidence="5">
    <location>
        <begin position="193"/>
        <end position="213"/>
    </location>
</feature>
<feature type="topological domain" description="Cytoplasmic" evidence="5">
    <location>
        <begin position="214"/>
        <end position="277"/>
    </location>
</feature>
<feature type="transmembrane region" description="Helical; Name=7" evidence="5">
    <location>
        <begin position="278"/>
        <end position="298"/>
    </location>
</feature>
<feature type="topological domain" description="Extracellular" evidence="5">
    <location>
        <begin position="299"/>
        <end position="313"/>
    </location>
</feature>
<feature type="transmembrane region" description="Helical; Name=8" evidence="5">
    <location>
        <begin position="314"/>
        <end position="334"/>
    </location>
</feature>
<feature type="topological domain" description="Cytoplasmic" evidence="5">
    <location>
        <begin position="335"/>
        <end position="342"/>
    </location>
</feature>
<feature type="transmembrane region" description="Helical; Name=9" evidence="5">
    <location>
        <begin position="343"/>
        <end position="363"/>
    </location>
</feature>
<feature type="topological domain" description="Extracellular" evidence="5">
    <location>
        <begin position="364"/>
        <end position="371"/>
    </location>
</feature>
<feature type="transmembrane region" description="Helical; Name=10" evidence="5">
    <location>
        <begin position="372"/>
        <end position="394"/>
    </location>
</feature>
<feature type="topological domain" description="Cytoplasmic" evidence="5">
    <location>
        <begin position="395"/>
        <end position="412"/>
    </location>
</feature>
<feature type="transmembrane region" description="Helical; Name=11" evidence="5">
    <location>
        <begin position="413"/>
        <end position="433"/>
    </location>
</feature>
<feature type="topological domain" description="Extracellular" evidence="5">
    <location>
        <begin position="434"/>
        <end position="439"/>
    </location>
</feature>
<feature type="transmembrane region" description="Helical; Name=12" evidence="5">
    <location>
        <begin position="440"/>
        <end position="460"/>
    </location>
</feature>
<feature type="topological domain" description="Cytoplasmic" evidence="5">
    <location>
        <begin position="461"/>
        <end position="501"/>
    </location>
</feature>
<feature type="binding site" evidence="2">
    <location>
        <position position="32"/>
    </location>
    <ligand>
        <name>D-fructose</name>
        <dbReference type="ChEBI" id="CHEBI:37721"/>
    </ligand>
</feature>
<feature type="binding site" evidence="2">
    <location>
        <position position="167"/>
    </location>
    <ligand>
        <name>D-fructose</name>
        <dbReference type="ChEBI" id="CHEBI:37721"/>
    </ligand>
</feature>
<feature type="binding site" evidence="2">
    <location>
        <position position="288"/>
    </location>
    <ligand>
        <name>D-fructose</name>
        <dbReference type="ChEBI" id="CHEBI:37721"/>
    </ligand>
</feature>
<feature type="binding site" evidence="2">
    <location>
        <begin position="296"/>
        <end position="298"/>
    </location>
    <ligand>
        <name>D-fructose</name>
        <dbReference type="ChEBI" id="CHEBI:37721"/>
    </ligand>
</feature>
<feature type="binding site" evidence="2">
    <location>
        <position position="387"/>
    </location>
    <ligand>
        <name>D-fructose</name>
        <dbReference type="ChEBI" id="CHEBI:37721"/>
    </ligand>
</feature>
<feature type="binding site" evidence="2">
    <location>
        <begin position="419"/>
        <end position="420"/>
    </location>
    <ligand>
        <name>D-fructose</name>
        <dbReference type="ChEBI" id="CHEBI:37721"/>
    </ligand>
</feature>
<feature type="modified residue" description="N-acetylmethionine" evidence="1">
    <location>
        <position position="1"/>
    </location>
</feature>
<feature type="glycosylation site" description="N-linked (GlcNAc...) asparagine" evidence="4">
    <location>
        <position position="51"/>
    </location>
</feature>
<feature type="sequence conflict" description="In Ref. 2; AAK63203." evidence="6" ref="2">
    <original>R</original>
    <variation>E</variation>
    <location>
        <position position="255"/>
    </location>
</feature>
<feature type="sequence conflict" description="In Ref. 2; AAK63203." evidence="6" ref="2">
    <original>F</original>
    <variation>L</variation>
    <location>
        <position position="353"/>
    </location>
</feature>
<feature type="sequence conflict" description="In Ref. 2; AAK63203." evidence="6" ref="2">
    <original>V</original>
    <variation>I</variation>
    <location>
        <position position="454"/>
    </location>
</feature>
<feature type="helix" evidence="8">
    <location>
        <begin position="20"/>
        <end position="23"/>
    </location>
</feature>
<feature type="helix" evidence="8">
    <location>
        <begin position="28"/>
        <end position="37"/>
    </location>
</feature>
<feature type="turn" evidence="8">
    <location>
        <begin position="38"/>
        <end position="40"/>
    </location>
</feature>
<feature type="helix" evidence="8">
    <location>
        <begin position="43"/>
        <end position="55"/>
    </location>
</feature>
<feature type="helix" evidence="8">
    <location>
        <begin position="64"/>
        <end position="87"/>
    </location>
</feature>
<feature type="helix" evidence="8">
    <location>
        <begin position="89"/>
        <end position="93"/>
    </location>
</feature>
<feature type="helix" evidence="8">
    <location>
        <begin position="98"/>
        <end position="108"/>
    </location>
</feature>
<feature type="helix" evidence="8">
    <location>
        <begin position="110"/>
        <end position="117"/>
    </location>
</feature>
<feature type="turn" evidence="8">
    <location>
        <begin position="119"/>
        <end position="121"/>
    </location>
</feature>
<feature type="helix" evidence="8">
    <location>
        <begin position="124"/>
        <end position="127"/>
    </location>
</feature>
<feature type="helix" evidence="8">
    <location>
        <begin position="129"/>
        <end position="153"/>
    </location>
</feature>
<feature type="strand" evidence="8">
    <location>
        <begin position="156"/>
        <end position="158"/>
    </location>
</feature>
<feature type="helix" evidence="8">
    <location>
        <begin position="160"/>
        <end position="162"/>
    </location>
</feature>
<feature type="helix" evidence="8">
    <location>
        <begin position="165"/>
        <end position="179"/>
    </location>
</feature>
<feature type="turn" evidence="8">
    <location>
        <begin position="183"/>
        <end position="186"/>
    </location>
</feature>
<feature type="turn" evidence="8">
    <location>
        <begin position="189"/>
        <end position="191"/>
    </location>
</feature>
<feature type="helix" evidence="8">
    <location>
        <begin position="192"/>
        <end position="197"/>
    </location>
</feature>
<feature type="helix" evidence="8">
    <location>
        <begin position="198"/>
        <end position="200"/>
    </location>
</feature>
<feature type="helix" evidence="8">
    <location>
        <begin position="201"/>
        <end position="209"/>
    </location>
</feature>
<feature type="helix" evidence="8">
    <location>
        <begin position="210"/>
        <end position="212"/>
    </location>
</feature>
<feature type="helix" evidence="8">
    <location>
        <begin position="217"/>
        <end position="222"/>
    </location>
</feature>
<feature type="helix" evidence="8">
    <location>
        <begin position="227"/>
        <end position="234"/>
    </location>
</feature>
<feature type="helix" evidence="8">
    <location>
        <begin position="246"/>
        <end position="250"/>
    </location>
</feature>
<feature type="helix" evidence="8">
    <location>
        <begin position="253"/>
        <end position="260"/>
    </location>
</feature>
<feature type="helix" evidence="8">
    <location>
        <begin position="266"/>
        <end position="270"/>
    </location>
</feature>
<feature type="strand" evidence="8">
    <location>
        <begin position="272"/>
        <end position="274"/>
    </location>
</feature>
<feature type="helix" evidence="8">
    <location>
        <begin position="275"/>
        <end position="289"/>
    </location>
</feature>
<feature type="helix" evidence="8">
    <location>
        <begin position="294"/>
        <end position="305"/>
    </location>
</feature>
<feature type="turn" evidence="8">
    <location>
        <begin position="306"/>
        <end position="308"/>
    </location>
</feature>
<feature type="helix" evidence="8">
    <location>
        <begin position="313"/>
        <end position="338"/>
    </location>
</feature>
<feature type="helix" evidence="8">
    <location>
        <begin position="341"/>
        <end position="362"/>
    </location>
</feature>
<feature type="turn" evidence="8">
    <location>
        <begin position="367"/>
        <end position="370"/>
    </location>
</feature>
<feature type="helix" evidence="8">
    <location>
        <begin position="371"/>
        <end position="387"/>
    </location>
</feature>
<feature type="turn" evidence="8">
    <location>
        <begin position="388"/>
        <end position="393"/>
    </location>
</feature>
<feature type="helix" evidence="8">
    <location>
        <begin position="394"/>
        <end position="402"/>
    </location>
</feature>
<feature type="turn" evidence="8">
    <location>
        <begin position="405"/>
        <end position="407"/>
    </location>
</feature>
<feature type="helix" evidence="8">
    <location>
        <begin position="408"/>
        <end position="436"/>
    </location>
</feature>
<feature type="helix" evidence="8">
    <location>
        <begin position="438"/>
        <end position="440"/>
    </location>
</feature>
<feature type="helix" evidence="8">
    <location>
        <begin position="443"/>
        <end position="458"/>
    </location>
</feature>
<name>GTR5_BOVIN</name>